<comment type="catalytic activity">
    <reaction>
        <text>2 pyruvate + H(+) = (2S)-2-acetolactate + CO2</text>
        <dbReference type="Rhea" id="RHEA:25249"/>
        <dbReference type="ChEBI" id="CHEBI:15361"/>
        <dbReference type="ChEBI" id="CHEBI:15378"/>
        <dbReference type="ChEBI" id="CHEBI:16526"/>
        <dbReference type="ChEBI" id="CHEBI:58476"/>
        <dbReference type="EC" id="2.2.1.6"/>
    </reaction>
</comment>
<comment type="cofactor">
    <cofactor evidence="1">
        <name>Mg(2+)</name>
        <dbReference type="ChEBI" id="CHEBI:18420"/>
    </cofactor>
    <text evidence="1">Binds 1 Mg(2+) ion per subunit.</text>
</comment>
<comment type="cofactor">
    <cofactor evidence="1">
        <name>thiamine diphosphate</name>
        <dbReference type="ChEBI" id="CHEBI:58937"/>
    </cofactor>
    <text evidence="1">Binds 1 thiamine pyrophosphate per subunit.</text>
</comment>
<comment type="pathway">
    <text>Amino-acid biosynthesis; L-isoleucine biosynthesis; L-isoleucine from 2-oxobutanoate: step 1/4.</text>
</comment>
<comment type="pathway">
    <text>Amino-acid biosynthesis; L-valine biosynthesis; L-valine from pyruvate: step 1/4.</text>
</comment>
<comment type="subunit">
    <text evidence="1">Tetramer of two large and two small chains.</text>
</comment>
<comment type="sequence caution" evidence="3">
    <conflict type="erroneous initiation">
        <sequence resource="EMBL-CDS" id="AAN45281"/>
    </conflict>
</comment>
<comment type="sequence caution" evidence="3">
    <conflict type="erroneous initiation">
        <sequence resource="EMBL-CDS" id="AAP18916"/>
    </conflict>
</comment>
<organism>
    <name type="scientific">Shigella flexneri</name>
    <dbReference type="NCBI Taxonomy" id="623"/>
    <lineage>
        <taxon>Bacteria</taxon>
        <taxon>Pseudomonadati</taxon>
        <taxon>Pseudomonadota</taxon>
        <taxon>Gammaproteobacteria</taxon>
        <taxon>Enterobacterales</taxon>
        <taxon>Enterobacteriaceae</taxon>
        <taxon>Shigella</taxon>
    </lineage>
</organism>
<reference key="1">
    <citation type="journal article" date="2002" name="Nucleic Acids Res.">
        <title>Genome sequence of Shigella flexneri 2a: insights into pathogenicity through comparison with genomes of Escherichia coli K12 and O157.</title>
        <authorList>
            <person name="Jin Q."/>
            <person name="Yuan Z."/>
            <person name="Xu J."/>
            <person name="Wang Y."/>
            <person name="Shen Y."/>
            <person name="Lu W."/>
            <person name="Wang J."/>
            <person name="Liu H."/>
            <person name="Yang J."/>
            <person name="Yang F."/>
            <person name="Zhang X."/>
            <person name="Zhang J."/>
            <person name="Yang G."/>
            <person name="Wu H."/>
            <person name="Qu D."/>
            <person name="Dong J."/>
            <person name="Sun L."/>
            <person name="Xue Y."/>
            <person name="Zhao A."/>
            <person name="Gao Y."/>
            <person name="Zhu J."/>
            <person name="Kan B."/>
            <person name="Ding K."/>
            <person name="Chen S."/>
            <person name="Cheng H."/>
            <person name="Yao Z."/>
            <person name="He B."/>
            <person name="Chen R."/>
            <person name="Ma D."/>
            <person name="Qiang B."/>
            <person name="Wen Y."/>
            <person name="Hou Y."/>
            <person name="Yu J."/>
        </authorList>
    </citation>
    <scope>NUCLEOTIDE SEQUENCE [LARGE SCALE GENOMIC DNA]</scope>
    <source>
        <strain>301 / Serotype 2a</strain>
    </source>
</reference>
<reference key="2">
    <citation type="journal article" date="2003" name="Infect. Immun.">
        <title>Complete genome sequence and comparative genomics of Shigella flexneri serotype 2a strain 2457T.</title>
        <authorList>
            <person name="Wei J."/>
            <person name="Goldberg M.B."/>
            <person name="Burland V."/>
            <person name="Venkatesan M.M."/>
            <person name="Deng W."/>
            <person name="Fournier G."/>
            <person name="Mayhew G.F."/>
            <person name="Plunkett G. III"/>
            <person name="Rose D.J."/>
            <person name="Darling A."/>
            <person name="Mau B."/>
            <person name="Perna N.T."/>
            <person name="Payne S.M."/>
            <person name="Runyen-Janecky L.J."/>
            <person name="Zhou S."/>
            <person name="Schwartz D.C."/>
            <person name="Blattner F.R."/>
        </authorList>
    </citation>
    <scope>NUCLEOTIDE SEQUENCE [LARGE SCALE GENOMIC DNA]</scope>
    <source>
        <strain>ATCC 700930 / 2457T / Serotype 2a</strain>
    </source>
</reference>
<sequence>MMQHQVNVSARFNPETLERVLRVVRHRGFHVCSMNMAAASDAQNINIELTVASPRSVDLLFSQLNKLVDVAHVAICQSTTTSQQIRA</sequence>
<protein>
    <recommendedName>
        <fullName>Acetolactate synthase isozyme 2 small subunit</fullName>
        <ecNumber>2.2.1.6</ecNumber>
    </recommendedName>
    <alternativeName>
        <fullName>ALS-II</fullName>
    </alternativeName>
    <alternativeName>
        <fullName>Acetohydroxy-acid synthase II small subunit</fullName>
        <shortName>AHAS-II</shortName>
    </alternativeName>
</protein>
<proteinExistence type="inferred from homology"/>
<feature type="chain" id="PRO_0000151431" description="Acetolactate synthase isozyme 2 small subunit">
    <location>
        <begin position="1"/>
        <end position="87"/>
    </location>
</feature>
<feature type="domain" description="ACT" evidence="2">
    <location>
        <begin position="5"/>
        <end position="78"/>
    </location>
</feature>
<dbReference type="EC" id="2.2.1.6"/>
<dbReference type="EMBL" id="AE005674">
    <property type="protein sequence ID" value="AAN45281.2"/>
    <property type="status" value="ALT_INIT"/>
    <property type="molecule type" value="Genomic_DNA"/>
</dbReference>
<dbReference type="EMBL" id="AE014073">
    <property type="protein sequence ID" value="AAP18916.1"/>
    <property type="status" value="ALT_INIT"/>
    <property type="molecule type" value="Genomic_DNA"/>
</dbReference>
<dbReference type="RefSeq" id="NP_709574.2">
    <property type="nucleotide sequence ID" value="NC_004337.2"/>
</dbReference>
<dbReference type="RefSeq" id="WP_000983255.1">
    <property type="nucleotide sequence ID" value="NZ_WPGW01000028.1"/>
</dbReference>
<dbReference type="SMR" id="P0ADG3"/>
<dbReference type="STRING" id="198214.SF3844"/>
<dbReference type="PaxDb" id="198214-SF3844"/>
<dbReference type="GeneID" id="1025509"/>
<dbReference type="GeneID" id="93778176"/>
<dbReference type="KEGG" id="sfl:SF3844"/>
<dbReference type="KEGG" id="sfx:S3915"/>
<dbReference type="PATRIC" id="fig|198214.7.peg.4535"/>
<dbReference type="HOGENOM" id="CLU_183627_0_0_6"/>
<dbReference type="UniPathway" id="UPA00047">
    <property type="reaction ID" value="UER00055"/>
</dbReference>
<dbReference type="UniPathway" id="UPA00049">
    <property type="reaction ID" value="UER00059"/>
</dbReference>
<dbReference type="Proteomes" id="UP000001006">
    <property type="component" value="Chromosome"/>
</dbReference>
<dbReference type="Proteomes" id="UP000002673">
    <property type="component" value="Chromosome"/>
</dbReference>
<dbReference type="GO" id="GO:0003984">
    <property type="term" value="F:acetolactate synthase activity"/>
    <property type="evidence" value="ECO:0007669"/>
    <property type="project" value="UniProtKB-EC"/>
</dbReference>
<dbReference type="GO" id="GO:0009097">
    <property type="term" value="P:isoleucine biosynthetic process"/>
    <property type="evidence" value="ECO:0007669"/>
    <property type="project" value="UniProtKB-UniPathway"/>
</dbReference>
<dbReference type="GO" id="GO:0009099">
    <property type="term" value="P:L-valine biosynthetic process"/>
    <property type="evidence" value="ECO:0007669"/>
    <property type="project" value="UniProtKB-UniPathway"/>
</dbReference>
<dbReference type="FunFam" id="3.30.70.260:FF:000009">
    <property type="entry name" value="Acetolactate synthase isozyme 2 small subunit"/>
    <property type="match status" value="1"/>
</dbReference>
<dbReference type="Gene3D" id="3.30.70.260">
    <property type="match status" value="1"/>
</dbReference>
<dbReference type="InterPro" id="IPR045865">
    <property type="entry name" value="ACT-like_dom_sf"/>
</dbReference>
<dbReference type="InterPro" id="IPR002912">
    <property type="entry name" value="ACT_dom"/>
</dbReference>
<dbReference type="NCBIfam" id="NF008362">
    <property type="entry name" value="PRK11152.1"/>
    <property type="match status" value="1"/>
</dbReference>
<dbReference type="Pfam" id="PF13710">
    <property type="entry name" value="ACT_5"/>
    <property type="match status" value="1"/>
</dbReference>
<dbReference type="SUPFAM" id="SSF55021">
    <property type="entry name" value="ACT-like"/>
    <property type="match status" value="1"/>
</dbReference>
<dbReference type="PROSITE" id="PS51671">
    <property type="entry name" value="ACT"/>
    <property type="match status" value="1"/>
</dbReference>
<evidence type="ECO:0000250" key="1"/>
<evidence type="ECO:0000255" key="2">
    <source>
        <dbReference type="PROSITE-ProRule" id="PRU01007"/>
    </source>
</evidence>
<evidence type="ECO:0000305" key="3"/>
<gene>
    <name type="primary">ilvM</name>
    <name type="ordered locus">SF3844</name>
    <name type="ordered locus">S3915</name>
</gene>
<name>ILVM_SHIFL</name>
<accession>P0ADG3</accession>
<accession>P13048</accession>
<accession>P78269</accession>
<keyword id="KW-0028">Amino-acid biosynthesis</keyword>
<keyword id="KW-0100">Branched-chain amino acid biosynthesis</keyword>
<keyword id="KW-0460">Magnesium</keyword>
<keyword id="KW-1185">Reference proteome</keyword>
<keyword id="KW-0786">Thiamine pyrophosphate</keyword>
<keyword id="KW-0808">Transferase</keyword>